<protein>
    <recommendedName>
        <fullName evidence="1">Adenylosuccinate synthetase</fullName>
        <shortName evidence="1">AMPSase</shortName>
        <shortName evidence="1">AdSS</shortName>
        <ecNumber evidence="1">6.3.4.4</ecNumber>
    </recommendedName>
    <alternativeName>
        <fullName evidence="1">IMP--aspartate ligase</fullName>
    </alternativeName>
</protein>
<dbReference type="EC" id="6.3.4.4" evidence="1"/>
<dbReference type="EMBL" id="CP001463">
    <property type="protein sequence ID" value="ACS89715.1"/>
    <property type="molecule type" value="Genomic_DNA"/>
</dbReference>
<dbReference type="RefSeq" id="WP_015848935.1">
    <property type="nucleotide sequence ID" value="NC_012883.1"/>
</dbReference>
<dbReference type="SMR" id="C6A270"/>
<dbReference type="STRING" id="604354.TSIB_0650"/>
<dbReference type="GeneID" id="8095638"/>
<dbReference type="KEGG" id="tsi:TSIB_0650"/>
<dbReference type="eggNOG" id="arCOG04387">
    <property type="taxonomic scope" value="Archaea"/>
</dbReference>
<dbReference type="HOGENOM" id="CLU_029848_0_0_2"/>
<dbReference type="OrthoDB" id="372247at2157"/>
<dbReference type="UniPathway" id="UPA00075">
    <property type="reaction ID" value="UER00335"/>
</dbReference>
<dbReference type="Proteomes" id="UP000009079">
    <property type="component" value="Chromosome"/>
</dbReference>
<dbReference type="GO" id="GO:0005737">
    <property type="term" value="C:cytoplasm"/>
    <property type="evidence" value="ECO:0007669"/>
    <property type="project" value="UniProtKB-SubCell"/>
</dbReference>
<dbReference type="GO" id="GO:0004019">
    <property type="term" value="F:adenylosuccinate synthase activity"/>
    <property type="evidence" value="ECO:0007669"/>
    <property type="project" value="UniProtKB-UniRule"/>
</dbReference>
<dbReference type="GO" id="GO:0005525">
    <property type="term" value="F:GTP binding"/>
    <property type="evidence" value="ECO:0007669"/>
    <property type="project" value="UniProtKB-UniRule"/>
</dbReference>
<dbReference type="GO" id="GO:0000287">
    <property type="term" value="F:magnesium ion binding"/>
    <property type="evidence" value="ECO:0007669"/>
    <property type="project" value="UniProtKB-UniRule"/>
</dbReference>
<dbReference type="GO" id="GO:0044208">
    <property type="term" value="P:'de novo' AMP biosynthetic process"/>
    <property type="evidence" value="ECO:0007669"/>
    <property type="project" value="UniProtKB-UniRule"/>
</dbReference>
<dbReference type="GO" id="GO:0046040">
    <property type="term" value="P:IMP metabolic process"/>
    <property type="evidence" value="ECO:0007669"/>
    <property type="project" value="TreeGrafter"/>
</dbReference>
<dbReference type="CDD" id="cd03108">
    <property type="entry name" value="AdSS"/>
    <property type="match status" value="1"/>
</dbReference>
<dbReference type="FunFam" id="3.40.440.10:FF:000005">
    <property type="entry name" value="Adenylosuccinate synthetase"/>
    <property type="match status" value="1"/>
</dbReference>
<dbReference type="FunFam" id="3.40.440.10:FF:000007">
    <property type="entry name" value="Adenylosuccinate synthetase"/>
    <property type="match status" value="1"/>
</dbReference>
<dbReference type="FunFam" id="3.90.170.10:FF:000002">
    <property type="entry name" value="Adenylosuccinate synthetase"/>
    <property type="match status" value="1"/>
</dbReference>
<dbReference type="Gene3D" id="3.40.440.10">
    <property type="entry name" value="Adenylosuccinate Synthetase, subunit A, domain 1"/>
    <property type="match status" value="2"/>
</dbReference>
<dbReference type="Gene3D" id="3.90.170.10">
    <property type="entry name" value="Adenylosuccinate Synthetase, subunit A, domain 3"/>
    <property type="match status" value="2"/>
</dbReference>
<dbReference type="HAMAP" id="MF_00011">
    <property type="entry name" value="Adenylosucc_synth"/>
    <property type="match status" value="1"/>
</dbReference>
<dbReference type="InterPro" id="IPR018220">
    <property type="entry name" value="Adenylosuccin_syn_GTP-bd"/>
</dbReference>
<dbReference type="InterPro" id="IPR042109">
    <property type="entry name" value="Adenylosuccinate_synth_dom1"/>
</dbReference>
<dbReference type="InterPro" id="IPR042111">
    <property type="entry name" value="Adenylosuccinate_synth_dom3"/>
</dbReference>
<dbReference type="InterPro" id="IPR001114">
    <property type="entry name" value="Adenylosuccinate_synthetase"/>
</dbReference>
<dbReference type="InterPro" id="IPR027417">
    <property type="entry name" value="P-loop_NTPase"/>
</dbReference>
<dbReference type="NCBIfam" id="NF003295">
    <property type="entry name" value="PRK04293.1"/>
    <property type="match status" value="1"/>
</dbReference>
<dbReference type="PANTHER" id="PTHR11846">
    <property type="entry name" value="ADENYLOSUCCINATE SYNTHETASE"/>
    <property type="match status" value="1"/>
</dbReference>
<dbReference type="PANTHER" id="PTHR11846:SF0">
    <property type="entry name" value="ADENYLOSUCCINATE SYNTHETASE"/>
    <property type="match status" value="1"/>
</dbReference>
<dbReference type="Pfam" id="PF00709">
    <property type="entry name" value="Adenylsucc_synt"/>
    <property type="match status" value="1"/>
</dbReference>
<dbReference type="SMART" id="SM00788">
    <property type="entry name" value="Adenylsucc_synt"/>
    <property type="match status" value="1"/>
</dbReference>
<dbReference type="SUPFAM" id="SSF52540">
    <property type="entry name" value="P-loop containing nucleoside triphosphate hydrolases"/>
    <property type="match status" value="1"/>
</dbReference>
<dbReference type="PROSITE" id="PS01266">
    <property type="entry name" value="ADENYLOSUCCIN_SYN_1"/>
    <property type="match status" value="1"/>
</dbReference>
<gene>
    <name evidence="1" type="primary">purA</name>
    <name type="ordered locus">TSIB_0650</name>
</gene>
<sequence>MPSYIVVGGQWGDEGKGSIIAYLAIHDKPEVIARGGVGTNAGHSVFINGKKYAVRQLPTGFMNENARLLVGAGVLVDPEVFFHELEHLKDFNVRGRIGLDYRCTVIEPGHKELDRSNGYLHGKIGTTGSGCGPANADRALRKAKQVKDLKELEPYLTDVAQEVNEALDEGKLVLVEGTQGFGLSLYYGSYPYVTSKDTSASAIASDVGIGPTRVDDVIVVFKSFPTRVGAGPFPTEMSEEEAERMGLVEYGTVTGRRRRVGWFDFEFARYSARINGATMLAVTMLDKYDKEAFGVTDFNKLPQKAKDFIAEIEEKVGVPVALIKTGPELEHIIDLRENI</sequence>
<accession>C6A270</accession>
<keyword id="KW-0963">Cytoplasm</keyword>
<keyword id="KW-0342">GTP-binding</keyword>
<keyword id="KW-0436">Ligase</keyword>
<keyword id="KW-0460">Magnesium</keyword>
<keyword id="KW-0479">Metal-binding</keyword>
<keyword id="KW-0547">Nucleotide-binding</keyword>
<keyword id="KW-0658">Purine biosynthesis</keyword>
<keyword id="KW-1185">Reference proteome</keyword>
<name>PURA_THESM</name>
<organism>
    <name type="scientific">Thermococcus sibiricus (strain DSM 12597 / MM 739)</name>
    <dbReference type="NCBI Taxonomy" id="604354"/>
    <lineage>
        <taxon>Archaea</taxon>
        <taxon>Methanobacteriati</taxon>
        <taxon>Methanobacteriota</taxon>
        <taxon>Thermococci</taxon>
        <taxon>Thermococcales</taxon>
        <taxon>Thermococcaceae</taxon>
        <taxon>Thermococcus</taxon>
    </lineage>
</organism>
<proteinExistence type="inferred from homology"/>
<comment type="function">
    <text evidence="1">Plays an important role in the de novo pathway of purine nucleotide biosynthesis. Catalyzes the first committed step in the biosynthesis of AMP from IMP.</text>
</comment>
<comment type="catalytic activity">
    <reaction evidence="1">
        <text>IMP + L-aspartate + GTP = N(6)-(1,2-dicarboxyethyl)-AMP + GDP + phosphate + 2 H(+)</text>
        <dbReference type="Rhea" id="RHEA:15753"/>
        <dbReference type="ChEBI" id="CHEBI:15378"/>
        <dbReference type="ChEBI" id="CHEBI:29991"/>
        <dbReference type="ChEBI" id="CHEBI:37565"/>
        <dbReference type="ChEBI" id="CHEBI:43474"/>
        <dbReference type="ChEBI" id="CHEBI:57567"/>
        <dbReference type="ChEBI" id="CHEBI:58053"/>
        <dbReference type="ChEBI" id="CHEBI:58189"/>
        <dbReference type="EC" id="6.3.4.4"/>
    </reaction>
</comment>
<comment type="cofactor">
    <cofactor evidence="1">
        <name>Mg(2+)</name>
        <dbReference type="ChEBI" id="CHEBI:18420"/>
    </cofactor>
    <text evidence="1">Binds 1 Mg(2+) ion per subunit.</text>
</comment>
<comment type="pathway">
    <text evidence="1">Purine metabolism; AMP biosynthesis via de novo pathway; AMP from IMP: step 1/2.</text>
</comment>
<comment type="subunit">
    <text evidence="1">Homodimer.</text>
</comment>
<comment type="subcellular location">
    <subcellularLocation>
        <location evidence="1">Cytoplasm</location>
    </subcellularLocation>
</comment>
<comment type="similarity">
    <text evidence="1">Belongs to the adenylosuccinate synthetase family.</text>
</comment>
<evidence type="ECO:0000255" key="1">
    <source>
        <dbReference type="HAMAP-Rule" id="MF_00011"/>
    </source>
</evidence>
<reference key="1">
    <citation type="journal article" date="2009" name="Appl. Environ. Microbiol.">
        <title>Metabolic versatility and indigenous origin of the archaeon Thermococcus sibiricus, isolated from a siberian oil reservoir, as revealed by genome analysis.</title>
        <authorList>
            <person name="Mardanov A.V."/>
            <person name="Ravin N.V."/>
            <person name="Svetlitchnyi V.A."/>
            <person name="Beletsky A.V."/>
            <person name="Miroshnichenko M.L."/>
            <person name="Bonch-Osmolovskaya E.A."/>
            <person name="Skryabin K.G."/>
        </authorList>
    </citation>
    <scope>NUCLEOTIDE SEQUENCE [LARGE SCALE GENOMIC DNA]</scope>
    <source>
        <strain>DSM 12597 / MM 739</strain>
    </source>
</reference>
<feature type="chain" id="PRO_1000201768" description="Adenylosuccinate synthetase">
    <location>
        <begin position="1"/>
        <end position="339"/>
    </location>
</feature>
<feature type="active site" description="Proton acceptor" evidence="1">
    <location>
        <position position="13"/>
    </location>
</feature>
<feature type="active site" description="Proton donor" evidence="1">
    <location>
        <position position="43"/>
    </location>
</feature>
<feature type="binding site" evidence="1">
    <location>
        <begin position="12"/>
        <end position="18"/>
    </location>
    <ligand>
        <name>GTP</name>
        <dbReference type="ChEBI" id="CHEBI:37565"/>
    </ligand>
</feature>
<feature type="binding site" description="in other chain" evidence="1">
    <location>
        <begin position="13"/>
        <end position="16"/>
    </location>
    <ligand>
        <name>IMP</name>
        <dbReference type="ChEBI" id="CHEBI:58053"/>
        <note>ligand shared between dimeric partners</note>
    </ligand>
</feature>
<feature type="binding site" evidence="1">
    <location>
        <position position="13"/>
    </location>
    <ligand>
        <name>Mg(2+)</name>
        <dbReference type="ChEBI" id="CHEBI:18420"/>
    </ligand>
</feature>
<feature type="binding site" description="in other chain" evidence="1">
    <location>
        <begin position="40"/>
        <end position="43"/>
    </location>
    <ligand>
        <name>IMP</name>
        <dbReference type="ChEBI" id="CHEBI:58053"/>
        <note>ligand shared between dimeric partners</note>
    </ligand>
</feature>
<feature type="binding site" evidence="1">
    <location>
        <begin position="42"/>
        <end position="44"/>
    </location>
    <ligand>
        <name>GTP</name>
        <dbReference type="ChEBI" id="CHEBI:37565"/>
    </ligand>
</feature>
<feature type="binding site" evidence="1">
    <location>
        <position position="42"/>
    </location>
    <ligand>
        <name>Mg(2+)</name>
        <dbReference type="ChEBI" id="CHEBI:18420"/>
    </ligand>
</feature>
<feature type="binding site" description="in other chain" evidence="1">
    <location>
        <position position="127"/>
    </location>
    <ligand>
        <name>IMP</name>
        <dbReference type="ChEBI" id="CHEBI:58053"/>
        <note>ligand shared between dimeric partners</note>
    </ligand>
</feature>
<feature type="binding site" evidence="1">
    <location>
        <position position="141"/>
    </location>
    <ligand>
        <name>IMP</name>
        <dbReference type="ChEBI" id="CHEBI:58053"/>
        <note>ligand shared between dimeric partners</note>
    </ligand>
</feature>
<feature type="binding site" description="in other chain" evidence="1">
    <location>
        <position position="179"/>
    </location>
    <ligand>
        <name>IMP</name>
        <dbReference type="ChEBI" id="CHEBI:58053"/>
        <note>ligand shared between dimeric partners</note>
    </ligand>
</feature>
<feature type="binding site" description="in other chain" evidence="1">
    <location>
        <position position="194"/>
    </location>
    <ligand>
        <name>IMP</name>
        <dbReference type="ChEBI" id="CHEBI:58053"/>
        <note>ligand shared between dimeric partners</note>
    </ligand>
</feature>
<feature type="binding site" evidence="1">
    <location>
        <begin position="252"/>
        <end position="258"/>
    </location>
    <ligand>
        <name>substrate</name>
    </ligand>
</feature>
<feature type="binding site" description="in other chain" evidence="1">
    <location>
        <position position="256"/>
    </location>
    <ligand>
        <name>IMP</name>
        <dbReference type="ChEBI" id="CHEBI:58053"/>
        <note>ligand shared between dimeric partners</note>
    </ligand>
</feature>
<feature type="binding site" evidence="1">
    <location>
        <position position="258"/>
    </location>
    <ligand>
        <name>GTP</name>
        <dbReference type="ChEBI" id="CHEBI:37565"/>
    </ligand>
</feature>
<feature type="binding site" evidence="1">
    <location>
        <begin position="284"/>
        <end position="286"/>
    </location>
    <ligand>
        <name>GTP</name>
        <dbReference type="ChEBI" id="CHEBI:37565"/>
    </ligand>
</feature>
<feature type="binding site" evidence="1">
    <location>
        <begin position="324"/>
        <end position="326"/>
    </location>
    <ligand>
        <name>GTP</name>
        <dbReference type="ChEBI" id="CHEBI:37565"/>
    </ligand>
</feature>